<proteinExistence type="inferred from homology"/>
<name>CCME_ALISL</name>
<keyword id="KW-0997">Cell inner membrane</keyword>
<keyword id="KW-1003">Cell membrane</keyword>
<keyword id="KW-0201">Cytochrome c-type biogenesis</keyword>
<keyword id="KW-0349">Heme</keyword>
<keyword id="KW-0408">Iron</keyword>
<keyword id="KW-0472">Membrane</keyword>
<keyword id="KW-0479">Metal-binding</keyword>
<keyword id="KW-0735">Signal-anchor</keyword>
<keyword id="KW-0812">Transmembrane</keyword>
<keyword id="KW-1133">Transmembrane helix</keyword>
<organism>
    <name type="scientific">Aliivibrio salmonicida (strain LFI1238)</name>
    <name type="common">Vibrio salmonicida (strain LFI1238)</name>
    <dbReference type="NCBI Taxonomy" id="316275"/>
    <lineage>
        <taxon>Bacteria</taxon>
        <taxon>Pseudomonadati</taxon>
        <taxon>Pseudomonadota</taxon>
        <taxon>Gammaproteobacteria</taxon>
        <taxon>Vibrionales</taxon>
        <taxon>Vibrionaceae</taxon>
        <taxon>Aliivibrio</taxon>
    </lineage>
</organism>
<accession>B6EJ35</accession>
<dbReference type="EMBL" id="FM178379">
    <property type="protein sequence ID" value="CAQ79961.1"/>
    <property type="molecule type" value="Genomic_DNA"/>
</dbReference>
<dbReference type="RefSeq" id="WP_012550780.1">
    <property type="nucleotide sequence ID" value="NC_011312.1"/>
</dbReference>
<dbReference type="SMR" id="B6EJ35"/>
<dbReference type="KEGG" id="vsa:VSAL_I2277"/>
<dbReference type="eggNOG" id="COG2332">
    <property type="taxonomic scope" value="Bacteria"/>
</dbReference>
<dbReference type="HOGENOM" id="CLU_079503_1_0_6"/>
<dbReference type="Proteomes" id="UP000001730">
    <property type="component" value="Chromosome 1"/>
</dbReference>
<dbReference type="GO" id="GO:0005886">
    <property type="term" value="C:plasma membrane"/>
    <property type="evidence" value="ECO:0007669"/>
    <property type="project" value="UniProtKB-SubCell"/>
</dbReference>
<dbReference type="GO" id="GO:0020037">
    <property type="term" value="F:heme binding"/>
    <property type="evidence" value="ECO:0007669"/>
    <property type="project" value="InterPro"/>
</dbReference>
<dbReference type="GO" id="GO:0046872">
    <property type="term" value="F:metal ion binding"/>
    <property type="evidence" value="ECO:0007669"/>
    <property type="project" value="UniProtKB-KW"/>
</dbReference>
<dbReference type="GO" id="GO:0017004">
    <property type="term" value="P:cytochrome complex assembly"/>
    <property type="evidence" value="ECO:0007669"/>
    <property type="project" value="UniProtKB-KW"/>
</dbReference>
<dbReference type="FunFam" id="2.40.50.140:FF:000104">
    <property type="entry name" value="Cytochrome c-type biogenesis protein CcmE"/>
    <property type="match status" value="1"/>
</dbReference>
<dbReference type="Gene3D" id="2.40.50.140">
    <property type="entry name" value="Nucleic acid-binding proteins"/>
    <property type="match status" value="1"/>
</dbReference>
<dbReference type="HAMAP" id="MF_01959">
    <property type="entry name" value="CcmE"/>
    <property type="match status" value="1"/>
</dbReference>
<dbReference type="InterPro" id="IPR004329">
    <property type="entry name" value="CcmE"/>
</dbReference>
<dbReference type="InterPro" id="IPR036127">
    <property type="entry name" value="CcmE-like_sf"/>
</dbReference>
<dbReference type="InterPro" id="IPR012340">
    <property type="entry name" value="NA-bd_OB-fold"/>
</dbReference>
<dbReference type="NCBIfam" id="NF009638">
    <property type="entry name" value="PRK13165.1"/>
    <property type="match status" value="1"/>
</dbReference>
<dbReference type="NCBIfam" id="NF009727">
    <property type="entry name" value="PRK13254.1-1"/>
    <property type="match status" value="1"/>
</dbReference>
<dbReference type="NCBIfam" id="NF009729">
    <property type="entry name" value="PRK13254.1-3"/>
    <property type="match status" value="1"/>
</dbReference>
<dbReference type="PANTHER" id="PTHR34128">
    <property type="entry name" value="CYTOCHROME C-TYPE BIOGENESIS PROTEIN CCME HOMOLOG, MITOCHONDRIAL"/>
    <property type="match status" value="1"/>
</dbReference>
<dbReference type="PANTHER" id="PTHR34128:SF2">
    <property type="entry name" value="CYTOCHROME C-TYPE BIOGENESIS PROTEIN CCME HOMOLOG, MITOCHONDRIAL"/>
    <property type="match status" value="1"/>
</dbReference>
<dbReference type="Pfam" id="PF03100">
    <property type="entry name" value="CcmE"/>
    <property type="match status" value="1"/>
</dbReference>
<dbReference type="SUPFAM" id="SSF82093">
    <property type="entry name" value="Heme chaperone CcmE"/>
    <property type="match status" value="1"/>
</dbReference>
<comment type="function">
    <text evidence="1">Heme chaperone required for the biogenesis of c-type cytochromes. Transiently binds heme delivered by CcmC and transfers the heme to apo-cytochromes in a process facilitated by CcmF and CcmH.</text>
</comment>
<comment type="subcellular location">
    <subcellularLocation>
        <location evidence="1">Cell inner membrane</location>
        <topology evidence="1">Single-pass type II membrane protein</topology>
        <orientation evidence="1">Periplasmic side</orientation>
    </subcellularLocation>
</comment>
<comment type="similarity">
    <text evidence="1">Belongs to the CcmE/CycJ family.</text>
</comment>
<protein>
    <recommendedName>
        <fullName evidence="1">Cytochrome c-type biogenesis protein CcmE</fullName>
    </recommendedName>
    <alternativeName>
        <fullName evidence="1">Cytochrome c maturation protein E</fullName>
    </alternativeName>
    <alternativeName>
        <fullName evidence="1">Heme chaperone CcmE</fullName>
    </alternativeName>
</protein>
<sequence>MNPRRKKRLGLILALVLGASATVGLMLYALNQNMDLFYTPTELVNGKPDGTKPEVGQRLRIGGMVVVGSVKRDSQSLEVRFQVEDIGPKVTVIYDGILPDLFREGQGIVAQGVLVDATTVKAHEVLAKHDEEYMPPEVAEAMKKTH</sequence>
<feature type="chain" id="PRO_1000189001" description="Cytochrome c-type biogenesis protein CcmE">
    <location>
        <begin position="1"/>
        <end position="146"/>
    </location>
</feature>
<feature type="topological domain" description="Cytoplasmic" evidence="1">
    <location>
        <begin position="1"/>
        <end position="8"/>
    </location>
</feature>
<feature type="transmembrane region" description="Helical; Signal-anchor for type II membrane protein" evidence="1">
    <location>
        <begin position="9"/>
        <end position="29"/>
    </location>
</feature>
<feature type="topological domain" description="Periplasmic" evidence="1">
    <location>
        <begin position="30"/>
        <end position="146"/>
    </location>
</feature>
<feature type="binding site" description="covalent" evidence="1">
    <location>
        <position position="129"/>
    </location>
    <ligand>
        <name>heme</name>
        <dbReference type="ChEBI" id="CHEBI:30413"/>
    </ligand>
</feature>
<feature type="binding site" description="axial binding residue" evidence="1">
    <location>
        <position position="133"/>
    </location>
    <ligand>
        <name>heme</name>
        <dbReference type="ChEBI" id="CHEBI:30413"/>
    </ligand>
    <ligandPart>
        <name>Fe</name>
        <dbReference type="ChEBI" id="CHEBI:18248"/>
    </ligandPart>
</feature>
<reference key="1">
    <citation type="journal article" date="2008" name="BMC Genomics">
        <title>The genome sequence of the fish pathogen Aliivibrio salmonicida strain LFI1238 shows extensive evidence of gene decay.</title>
        <authorList>
            <person name="Hjerde E."/>
            <person name="Lorentzen M.S."/>
            <person name="Holden M.T."/>
            <person name="Seeger K."/>
            <person name="Paulsen S."/>
            <person name="Bason N."/>
            <person name="Churcher C."/>
            <person name="Harris D."/>
            <person name="Norbertczak H."/>
            <person name="Quail M.A."/>
            <person name="Sanders S."/>
            <person name="Thurston S."/>
            <person name="Parkhill J."/>
            <person name="Willassen N.P."/>
            <person name="Thomson N.R."/>
        </authorList>
    </citation>
    <scope>NUCLEOTIDE SEQUENCE [LARGE SCALE GENOMIC DNA]</scope>
    <source>
        <strain>LFI1238</strain>
    </source>
</reference>
<evidence type="ECO:0000255" key="1">
    <source>
        <dbReference type="HAMAP-Rule" id="MF_01959"/>
    </source>
</evidence>
<gene>
    <name evidence="1" type="primary">ccmE</name>
    <name evidence="1" type="synonym">cycJ</name>
    <name type="ordered locus">VSAL_I2277</name>
</gene>